<evidence type="ECO:0000255" key="1">
    <source>
        <dbReference type="HAMAP-Rule" id="MF_00165"/>
    </source>
</evidence>
<name>KTHY_METMP</name>
<accession>Q6LYF7</accession>
<feature type="chain" id="PRO_0000155389" description="Probable thymidylate kinase">
    <location>
        <begin position="1"/>
        <end position="199"/>
    </location>
</feature>
<feature type="binding site" evidence="1">
    <location>
        <begin position="9"/>
        <end position="16"/>
    </location>
    <ligand>
        <name>ATP</name>
        <dbReference type="ChEBI" id="CHEBI:30616"/>
    </ligand>
</feature>
<gene>
    <name evidence="1" type="primary">tmk</name>
    <name type="ordered locus">MMP1034</name>
</gene>
<proteinExistence type="inferred from homology"/>
<sequence length="199" mass="22723">MNKFIVFEGIDGCGKTTQAKLVAEKLNANFTFEPTDGKIGKSIREILAGSKCNKETLALLFAADRVEHVSKIEEDLKNAHVVSDRYVYSSIVYQMTQGIPKDFIYKINDYAKIPDLVVLLDVDLNEALKRMESREKEIFEKLEFQKKIKEGYYNLINSENGKFMPKYGFIVIDTTSKPIDQVFNEILNAIVDKIPDIIQ</sequence>
<protein>
    <recommendedName>
        <fullName evidence="1">Probable thymidylate kinase</fullName>
        <ecNumber evidence="1">2.7.4.9</ecNumber>
    </recommendedName>
    <alternativeName>
        <fullName evidence="1">dTMP kinase</fullName>
    </alternativeName>
</protein>
<keyword id="KW-0067">ATP-binding</keyword>
<keyword id="KW-0418">Kinase</keyword>
<keyword id="KW-0545">Nucleotide biosynthesis</keyword>
<keyword id="KW-0547">Nucleotide-binding</keyword>
<keyword id="KW-1185">Reference proteome</keyword>
<keyword id="KW-0808">Transferase</keyword>
<organism>
    <name type="scientific">Methanococcus maripaludis (strain DSM 14266 / JCM 13030 / NBRC 101832 / S2 / LL)</name>
    <dbReference type="NCBI Taxonomy" id="267377"/>
    <lineage>
        <taxon>Archaea</taxon>
        <taxon>Methanobacteriati</taxon>
        <taxon>Methanobacteriota</taxon>
        <taxon>Methanomada group</taxon>
        <taxon>Methanococci</taxon>
        <taxon>Methanococcales</taxon>
        <taxon>Methanococcaceae</taxon>
        <taxon>Methanococcus</taxon>
    </lineage>
</organism>
<reference key="1">
    <citation type="journal article" date="2004" name="J. Bacteriol.">
        <title>Complete genome sequence of the genetically tractable hydrogenotrophic methanogen Methanococcus maripaludis.</title>
        <authorList>
            <person name="Hendrickson E.L."/>
            <person name="Kaul R."/>
            <person name="Zhou Y."/>
            <person name="Bovee D."/>
            <person name="Chapman P."/>
            <person name="Chung J."/>
            <person name="Conway de Macario E."/>
            <person name="Dodsworth J.A."/>
            <person name="Gillett W."/>
            <person name="Graham D.E."/>
            <person name="Hackett M."/>
            <person name="Haydock A.K."/>
            <person name="Kang A."/>
            <person name="Land M.L."/>
            <person name="Levy R."/>
            <person name="Lie T.J."/>
            <person name="Major T.A."/>
            <person name="Moore B.C."/>
            <person name="Porat I."/>
            <person name="Palmeiri A."/>
            <person name="Rouse G."/>
            <person name="Saenphimmachak C."/>
            <person name="Soell D."/>
            <person name="Van Dien S."/>
            <person name="Wang T."/>
            <person name="Whitman W.B."/>
            <person name="Xia Q."/>
            <person name="Zhang Y."/>
            <person name="Larimer F.W."/>
            <person name="Olson M.V."/>
            <person name="Leigh J.A."/>
        </authorList>
    </citation>
    <scope>NUCLEOTIDE SEQUENCE [LARGE SCALE GENOMIC DNA]</scope>
    <source>
        <strain>DSM 14266 / JCM 13030 / NBRC 101832 / S2 / LL</strain>
    </source>
</reference>
<comment type="catalytic activity">
    <reaction evidence="1">
        <text>dTMP + ATP = dTDP + ADP</text>
        <dbReference type="Rhea" id="RHEA:13517"/>
        <dbReference type="ChEBI" id="CHEBI:30616"/>
        <dbReference type="ChEBI" id="CHEBI:58369"/>
        <dbReference type="ChEBI" id="CHEBI:63528"/>
        <dbReference type="ChEBI" id="CHEBI:456216"/>
        <dbReference type="EC" id="2.7.4.9"/>
    </reaction>
</comment>
<comment type="similarity">
    <text evidence="1">Belongs to the thymidylate kinase family.</text>
</comment>
<dbReference type="EC" id="2.7.4.9" evidence="1"/>
<dbReference type="EMBL" id="BX950229">
    <property type="protein sequence ID" value="CAF30590.1"/>
    <property type="molecule type" value="Genomic_DNA"/>
</dbReference>
<dbReference type="RefSeq" id="WP_011170978.1">
    <property type="nucleotide sequence ID" value="NC_005791.1"/>
</dbReference>
<dbReference type="SMR" id="Q6LYF7"/>
<dbReference type="STRING" id="267377.MMP1034"/>
<dbReference type="EnsemblBacteria" id="CAF30590">
    <property type="protein sequence ID" value="CAF30590"/>
    <property type="gene ID" value="MMP1034"/>
</dbReference>
<dbReference type="GeneID" id="2761844"/>
<dbReference type="KEGG" id="mmp:MMP1034"/>
<dbReference type="PATRIC" id="fig|267377.15.peg.1066"/>
<dbReference type="eggNOG" id="arCOG01891">
    <property type="taxonomic scope" value="Archaea"/>
</dbReference>
<dbReference type="HOGENOM" id="CLU_049131_1_3_2"/>
<dbReference type="OrthoDB" id="43083at2157"/>
<dbReference type="Proteomes" id="UP000000590">
    <property type="component" value="Chromosome"/>
</dbReference>
<dbReference type="GO" id="GO:0005737">
    <property type="term" value="C:cytoplasm"/>
    <property type="evidence" value="ECO:0007669"/>
    <property type="project" value="TreeGrafter"/>
</dbReference>
<dbReference type="GO" id="GO:0005524">
    <property type="term" value="F:ATP binding"/>
    <property type="evidence" value="ECO:0007669"/>
    <property type="project" value="UniProtKB-UniRule"/>
</dbReference>
<dbReference type="GO" id="GO:0004798">
    <property type="term" value="F:dTMP kinase activity"/>
    <property type="evidence" value="ECO:0007669"/>
    <property type="project" value="UniProtKB-UniRule"/>
</dbReference>
<dbReference type="GO" id="GO:0006233">
    <property type="term" value="P:dTDP biosynthetic process"/>
    <property type="evidence" value="ECO:0007669"/>
    <property type="project" value="InterPro"/>
</dbReference>
<dbReference type="GO" id="GO:0006235">
    <property type="term" value="P:dTTP biosynthetic process"/>
    <property type="evidence" value="ECO:0007669"/>
    <property type="project" value="UniProtKB-UniRule"/>
</dbReference>
<dbReference type="GO" id="GO:0006227">
    <property type="term" value="P:dUDP biosynthetic process"/>
    <property type="evidence" value="ECO:0007669"/>
    <property type="project" value="TreeGrafter"/>
</dbReference>
<dbReference type="CDD" id="cd01672">
    <property type="entry name" value="TMPK"/>
    <property type="match status" value="1"/>
</dbReference>
<dbReference type="Gene3D" id="3.40.50.300">
    <property type="entry name" value="P-loop containing nucleotide triphosphate hydrolases"/>
    <property type="match status" value="1"/>
</dbReference>
<dbReference type="HAMAP" id="MF_00165">
    <property type="entry name" value="Thymidylate_kinase"/>
    <property type="match status" value="1"/>
</dbReference>
<dbReference type="InterPro" id="IPR027417">
    <property type="entry name" value="P-loop_NTPase"/>
</dbReference>
<dbReference type="InterPro" id="IPR039430">
    <property type="entry name" value="Thymidylate_kin-like_dom"/>
</dbReference>
<dbReference type="InterPro" id="IPR018095">
    <property type="entry name" value="Thymidylate_kin_CS"/>
</dbReference>
<dbReference type="InterPro" id="IPR018094">
    <property type="entry name" value="Thymidylate_kinase"/>
</dbReference>
<dbReference type="NCBIfam" id="TIGR00041">
    <property type="entry name" value="DTMP_kinase"/>
    <property type="match status" value="1"/>
</dbReference>
<dbReference type="PANTHER" id="PTHR10344">
    <property type="entry name" value="THYMIDYLATE KINASE"/>
    <property type="match status" value="1"/>
</dbReference>
<dbReference type="PANTHER" id="PTHR10344:SF4">
    <property type="entry name" value="UMP-CMP KINASE 2, MITOCHONDRIAL"/>
    <property type="match status" value="1"/>
</dbReference>
<dbReference type="Pfam" id="PF02223">
    <property type="entry name" value="Thymidylate_kin"/>
    <property type="match status" value="1"/>
</dbReference>
<dbReference type="SUPFAM" id="SSF52540">
    <property type="entry name" value="P-loop containing nucleoside triphosphate hydrolases"/>
    <property type="match status" value="1"/>
</dbReference>
<dbReference type="PROSITE" id="PS01331">
    <property type="entry name" value="THYMIDYLATE_KINASE"/>
    <property type="match status" value="1"/>
</dbReference>